<name>H2A4_ARATH</name>
<feature type="chain" id="PRO_0000055202" description="Probable histone H2A.4">
    <location>
        <begin position="1"/>
        <end position="153"/>
    </location>
</feature>
<feature type="region of interest" description="Disordered" evidence="2">
    <location>
        <begin position="1"/>
        <end position="30"/>
    </location>
</feature>
<feature type="region of interest" description="Disordered" evidence="2">
    <location>
        <begin position="129"/>
        <end position="153"/>
    </location>
</feature>
<feature type="short sequence motif" description="SPKK motif">
    <location>
        <begin position="149"/>
        <end position="152"/>
    </location>
</feature>
<feature type="compositionally biased region" description="Basic residues" evidence="2">
    <location>
        <begin position="1"/>
        <end position="12"/>
    </location>
</feature>
<feature type="compositionally biased region" description="Low complexity" evidence="2">
    <location>
        <begin position="133"/>
        <end position="147"/>
    </location>
</feature>
<accession>Q9LZ46</accession>
<sequence>MDSGTKVKKGAAGRRSGGGPKKKPVSRSVKSGLQFPVGRIGRYLKKGRYSKRVGTGAPVYLAAVLEYLAAEVLELAGNAARDNKKNRIIPRHVLLAVRNDEELGTLLKGVTIAHGGVLPNINPILLPKKSEKAASTTKTPKSPSKATKSPKKS</sequence>
<protein>
    <recommendedName>
        <fullName>Probable histone H2A.4</fullName>
    </recommendedName>
    <alternativeName>
        <fullName>HTA12</fullName>
    </alternativeName>
</protein>
<reference key="1">
    <citation type="journal article" date="2000" name="Nature">
        <title>Sequence and analysis of chromosome 5 of the plant Arabidopsis thaliana.</title>
        <authorList>
            <person name="Tabata S."/>
            <person name="Kaneko T."/>
            <person name="Nakamura Y."/>
            <person name="Kotani H."/>
            <person name="Kato T."/>
            <person name="Asamizu E."/>
            <person name="Miyajima N."/>
            <person name="Sasamoto S."/>
            <person name="Kimura T."/>
            <person name="Hosouchi T."/>
            <person name="Kawashima K."/>
            <person name="Kohara M."/>
            <person name="Matsumoto M."/>
            <person name="Matsuno A."/>
            <person name="Muraki A."/>
            <person name="Nakayama S."/>
            <person name="Nakazaki N."/>
            <person name="Naruo K."/>
            <person name="Okumura S."/>
            <person name="Shinpo S."/>
            <person name="Takeuchi C."/>
            <person name="Wada T."/>
            <person name="Watanabe A."/>
            <person name="Yamada M."/>
            <person name="Yasuda M."/>
            <person name="Sato S."/>
            <person name="de la Bastide M."/>
            <person name="Huang E."/>
            <person name="Spiegel L."/>
            <person name="Gnoj L."/>
            <person name="O'Shaughnessy A."/>
            <person name="Preston R."/>
            <person name="Habermann K."/>
            <person name="Murray J."/>
            <person name="Johnson D."/>
            <person name="Rohlfing T."/>
            <person name="Nelson J."/>
            <person name="Stoneking T."/>
            <person name="Pepin K."/>
            <person name="Spieth J."/>
            <person name="Sekhon M."/>
            <person name="Armstrong J."/>
            <person name="Becker M."/>
            <person name="Belter E."/>
            <person name="Cordum H."/>
            <person name="Cordes M."/>
            <person name="Courtney L."/>
            <person name="Courtney W."/>
            <person name="Dante M."/>
            <person name="Du H."/>
            <person name="Edwards J."/>
            <person name="Fryman J."/>
            <person name="Haakensen B."/>
            <person name="Lamar E."/>
            <person name="Latreille P."/>
            <person name="Leonard S."/>
            <person name="Meyer R."/>
            <person name="Mulvaney E."/>
            <person name="Ozersky P."/>
            <person name="Riley A."/>
            <person name="Strowmatt C."/>
            <person name="Wagner-McPherson C."/>
            <person name="Wollam A."/>
            <person name="Yoakum M."/>
            <person name="Bell M."/>
            <person name="Dedhia N."/>
            <person name="Parnell L."/>
            <person name="Shah R."/>
            <person name="Rodriguez M."/>
            <person name="Hoon See L."/>
            <person name="Vil D."/>
            <person name="Baker J."/>
            <person name="Kirchoff K."/>
            <person name="Toth K."/>
            <person name="King L."/>
            <person name="Bahret A."/>
            <person name="Miller B."/>
            <person name="Marra M.A."/>
            <person name="Martienssen R."/>
            <person name="McCombie W.R."/>
            <person name="Wilson R.K."/>
            <person name="Murphy G."/>
            <person name="Bancroft I."/>
            <person name="Volckaert G."/>
            <person name="Wambutt R."/>
            <person name="Duesterhoeft A."/>
            <person name="Stiekema W."/>
            <person name="Pohl T."/>
            <person name="Entian K.-D."/>
            <person name="Terryn N."/>
            <person name="Hartley N."/>
            <person name="Bent E."/>
            <person name="Johnson S."/>
            <person name="Langham S.-A."/>
            <person name="McCullagh B."/>
            <person name="Robben J."/>
            <person name="Grymonprez B."/>
            <person name="Zimmermann W."/>
            <person name="Ramsperger U."/>
            <person name="Wedler H."/>
            <person name="Balke K."/>
            <person name="Wedler E."/>
            <person name="Peters S."/>
            <person name="van Staveren M."/>
            <person name="Dirkse W."/>
            <person name="Mooijman P."/>
            <person name="Klein Lankhorst R."/>
            <person name="Weitzenegger T."/>
            <person name="Bothe G."/>
            <person name="Rose M."/>
            <person name="Hauf J."/>
            <person name="Berneiser S."/>
            <person name="Hempel S."/>
            <person name="Feldpausch M."/>
            <person name="Lamberth S."/>
            <person name="Villarroel R."/>
            <person name="Gielen J."/>
            <person name="Ardiles W."/>
            <person name="Bents O."/>
            <person name="Lemcke K."/>
            <person name="Kolesov G."/>
            <person name="Mayer K.F.X."/>
            <person name="Rudd S."/>
            <person name="Schoof H."/>
            <person name="Schueller C."/>
            <person name="Zaccaria P."/>
            <person name="Mewes H.-W."/>
            <person name="Bevan M."/>
            <person name="Fransz P.F."/>
        </authorList>
    </citation>
    <scope>NUCLEOTIDE SEQUENCE [LARGE SCALE GENOMIC DNA]</scope>
    <source>
        <strain>cv. Columbia</strain>
    </source>
</reference>
<reference key="2">
    <citation type="journal article" date="2017" name="Plant J.">
        <title>Araport11: a complete reannotation of the Arabidopsis thaliana reference genome.</title>
        <authorList>
            <person name="Cheng C.Y."/>
            <person name="Krishnakumar V."/>
            <person name="Chan A.P."/>
            <person name="Thibaud-Nissen F."/>
            <person name="Schobel S."/>
            <person name="Town C.D."/>
        </authorList>
    </citation>
    <scope>GENOME REANNOTATION</scope>
    <source>
        <strain>cv. Columbia</strain>
    </source>
</reference>
<reference key="3">
    <citation type="submission" date="2002-03" db="EMBL/GenBank/DDBJ databases">
        <title>Full-length cDNA from Arabidopsis thaliana.</title>
        <authorList>
            <person name="Brover V.V."/>
            <person name="Troukhan M.E."/>
            <person name="Alexandrov N.A."/>
            <person name="Lu Y.-P."/>
            <person name="Flavell R.B."/>
            <person name="Feldmann K.A."/>
        </authorList>
    </citation>
    <scope>NUCLEOTIDE SEQUENCE [LARGE SCALE MRNA]</scope>
</reference>
<reference key="4">
    <citation type="journal article" date="2006" name="Plant Cell">
        <title>Constitutive expression exposes functional redundancy between the Arabidopsis histone H2A gene HTA1 and other H2A gene family members.</title>
        <authorList>
            <person name="Yi H."/>
            <person name="Sardesai N."/>
            <person name="Fujinuma T."/>
            <person name="Chan C.-W."/>
            <person name="Veena X."/>
            <person name="Gelvin S.B."/>
        </authorList>
    </citation>
    <scope>NOMENCLATURE</scope>
</reference>
<reference key="5">
    <citation type="journal article" date="2007" name="Nature">
        <title>Control of DNA methylation and heterochromatic silencing by histone H2B deubiquitination.</title>
        <authorList>
            <person name="Sridhar V.V."/>
            <person name="Kapoor A."/>
            <person name="Zhang K."/>
            <person name="Zhu J."/>
            <person name="Zhou T."/>
            <person name="Hasegawa P.M."/>
            <person name="Bressan R.A."/>
            <person name="Zhu J.-K."/>
        </authorList>
    </citation>
    <scope>LACK OF UBIQUITINATION</scope>
    <scope>IDENTIFICATION BY MASS SPECTROMETRY</scope>
</reference>
<organism>
    <name type="scientific">Arabidopsis thaliana</name>
    <name type="common">Mouse-ear cress</name>
    <dbReference type="NCBI Taxonomy" id="3702"/>
    <lineage>
        <taxon>Eukaryota</taxon>
        <taxon>Viridiplantae</taxon>
        <taxon>Streptophyta</taxon>
        <taxon>Embryophyta</taxon>
        <taxon>Tracheophyta</taxon>
        <taxon>Spermatophyta</taxon>
        <taxon>Magnoliopsida</taxon>
        <taxon>eudicotyledons</taxon>
        <taxon>Gunneridae</taxon>
        <taxon>Pentapetalae</taxon>
        <taxon>rosids</taxon>
        <taxon>malvids</taxon>
        <taxon>Brassicales</taxon>
        <taxon>Brassicaceae</taxon>
        <taxon>Camelineae</taxon>
        <taxon>Arabidopsis</taxon>
    </lineage>
</organism>
<proteinExistence type="evidence at protein level"/>
<comment type="function">
    <text>Core component of nucleosome. Nucleosomes wrap and compact DNA into chromatin, limiting DNA accessibility to the cellular machineries which require DNA as a template. Histones thereby play a central role in transcription regulation, DNA repair, DNA replication and chromosomal stability. DNA accessibility is regulated via a complex set of post-translational modifications of histones, also called histone code, and nucleosome remodeling.</text>
</comment>
<comment type="subunit">
    <text>The nucleosome is a histone octamer containing two molecules each of H2A, H2B, H3 and H4 assembled in one H3-H4 heterotetramer and two H2A-H2B heterodimers. The octamer wraps approximately 147 bp of DNA.</text>
</comment>
<comment type="subcellular location">
    <subcellularLocation>
        <location evidence="1">Nucleus</location>
    </subcellularLocation>
    <subcellularLocation>
        <location evidence="1">Chromosome</location>
    </subcellularLocation>
</comment>
<comment type="alternative products">
    <event type="alternative splicing"/>
    <isoform>
        <id>Q9LZ46-1</id>
        <name>1</name>
        <sequence type="displayed"/>
    </isoform>
    <text>A number of isoforms are produced. According to EST sequences.</text>
</comment>
<comment type="domain">
    <text>Contains one SPKK motif which may interact with the minor groove of A/T-rich DNA sites. Phosphorylation of this motif may regulate DNA binding. This motif is reiterated in both termini of histone H1 and in the N-terminus of sea urchin histones H2B, but its presence in the C-terminus seems to be unique to plant H2A.</text>
</comment>
<comment type="PTM">
    <text>Not ubiquitinated.</text>
</comment>
<comment type="similarity">
    <text evidence="3">Belongs to the histone H2A family.</text>
</comment>
<dbReference type="EMBL" id="AL162971">
    <property type="protein sequence ID" value="CAB85993.1"/>
    <property type="molecule type" value="Genomic_DNA"/>
</dbReference>
<dbReference type="EMBL" id="CP002688">
    <property type="protein sequence ID" value="AED90489.1"/>
    <property type="molecule type" value="Genomic_DNA"/>
</dbReference>
<dbReference type="EMBL" id="AY085515">
    <property type="protein sequence ID" value="AAM62739.1"/>
    <property type="molecule type" value="mRNA"/>
</dbReference>
<dbReference type="PIR" id="T48277">
    <property type="entry name" value="T48277"/>
</dbReference>
<dbReference type="RefSeq" id="NP_195876.1">
    <molecule id="Q9LZ46-1"/>
    <property type="nucleotide sequence ID" value="NM_120334.3"/>
</dbReference>
<dbReference type="SMR" id="Q9LZ46"/>
<dbReference type="BioGRID" id="17167">
    <property type="interactions" value="4"/>
</dbReference>
<dbReference type="FunCoup" id="Q9LZ46">
    <property type="interactions" value="71"/>
</dbReference>
<dbReference type="STRING" id="3702.Q9LZ46"/>
<dbReference type="EnsemblPlants" id="AT5G02560.1">
    <molecule id="Q9LZ46-1"/>
    <property type="protein sequence ID" value="AT5G02560.1"/>
    <property type="gene ID" value="AT5G02560"/>
</dbReference>
<dbReference type="GeneID" id="831891"/>
<dbReference type="Gramene" id="AT5G02560.1">
    <molecule id="Q9LZ46-1"/>
    <property type="protein sequence ID" value="AT5G02560.1"/>
    <property type="gene ID" value="AT5G02560"/>
</dbReference>
<dbReference type="KEGG" id="ath:AT5G02560"/>
<dbReference type="Araport" id="AT5G02560"/>
<dbReference type="TAIR" id="AT5G02560">
    <property type="gene designation" value="HTA12"/>
</dbReference>
<dbReference type="HOGENOM" id="CLU_062828_1_1_1"/>
<dbReference type="InParanoid" id="Q9LZ46"/>
<dbReference type="OrthoDB" id="9421954at2759"/>
<dbReference type="PhylomeDB" id="Q9LZ46"/>
<dbReference type="PRO" id="PR:Q9LZ46"/>
<dbReference type="Proteomes" id="UP000006548">
    <property type="component" value="Chromosome 5"/>
</dbReference>
<dbReference type="ExpressionAtlas" id="Q9LZ46">
    <property type="expression patterns" value="baseline and differential"/>
</dbReference>
<dbReference type="GO" id="GO:0000786">
    <property type="term" value="C:nucleosome"/>
    <property type="evidence" value="ECO:0007669"/>
    <property type="project" value="UniProtKB-KW"/>
</dbReference>
<dbReference type="GO" id="GO:0005634">
    <property type="term" value="C:nucleus"/>
    <property type="evidence" value="ECO:0007669"/>
    <property type="project" value="UniProtKB-SubCell"/>
</dbReference>
<dbReference type="GO" id="GO:0003677">
    <property type="term" value="F:DNA binding"/>
    <property type="evidence" value="ECO:0007669"/>
    <property type="project" value="UniProtKB-KW"/>
</dbReference>
<dbReference type="GO" id="GO:0046982">
    <property type="term" value="F:protein heterodimerization activity"/>
    <property type="evidence" value="ECO:0007669"/>
    <property type="project" value="InterPro"/>
</dbReference>
<dbReference type="GO" id="GO:0030527">
    <property type="term" value="F:structural constituent of chromatin"/>
    <property type="evidence" value="ECO:0007669"/>
    <property type="project" value="InterPro"/>
</dbReference>
<dbReference type="CDD" id="cd00074">
    <property type="entry name" value="HFD_H2A"/>
    <property type="match status" value="1"/>
</dbReference>
<dbReference type="FunFam" id="1.10.20.10:FF:000026">
    <property type="entry name" value="Histone H2A"/>
    <property type="match status" value="1"/>
</dbReference>
<dbReference type="Gene3D" id="1.10.20.10">
    <property type="entry name" value="Histone, subunit A"/>
    <property type="match status" value="1"/>
</dbReference>
<dbReference type="InterPro" id="IPR009072">
    <property type="entry name" value="Histone-fold"/>
</dbReference>
<dbReference type="InterPro" id="IPR002119">
    <property type="entry name" value="Histone_H2A"/>
</dbReference>
<dbReference type="InterPro" id="IPR007125">
    <property type="entry name" value="Histone_H2A/H2B/H3"/>
</dbReference>
<dbReference type="InterPro" id="IPR032454">
    <property type="entry name" value="Histone_H2A_C"/>
</dbReference>
<dbReference type="PANTHER" id="PTHR23430">
    <property type="entry name" value="HISTONE H2A"/>
    <property type="match status" value="1"/>
</dbReference>
<dbReference type="Pfam" id="PF00125">
    <property type="entry name" value="Histone"/>
    <property type="match status" value="1"/>
</dbReference>
<dbReference type="Pfam" id="PF16211">
    <property type="entry name" value="Histone_H2A_C"/>
    <property type="match status" value="1"/>
</dbReference>
<dbReference type="PRINTS" id="PR00620">
    <property type="entry name" value="HISTONEH2A"/>
</dbReference>
<dbReference type="SMART" id="SM00414">
    <property type="entry name" value="H2A"/>
    <property type="match status" value="1"/>
</dbReference>
<dbReference type="SUPFAM" id="SSF47113">
    <property type="entry name" value="Histone-fold"/>
    <property type="match status" value="1"/>
</dbReference>
<evidence type="ECO:0000250" key="1"/>
<evidence type="ECO:0000256" key="2">
    <source>
        <dbReference type="SAM" id="MobiDB-lite"/>
    </source>
</evidence>
<evidence type="ECO:0000305" key="3"/>
<gene>
    <name type="ordered locus">At5g02560</name>
    <name type="ORF">T22P11.150</name>
</gene>
<keyword id="KW-0025">Alternative splicing</keyword>
<keyword id="KW-0158">Chromosome</keyword>
<keyword id="KW-0238">DNA-binding</keyword>
<keyword id="KW-0544">Nucleosome core</keyword>
<keyword id="KW-0539">Nucleus</keyword>
<keyword id="KW-1185">Reference proteome</keyword>